<reference key="1">
    <citation type="submission" date="2008-02" db="EMBL/GenBank/DDBJ databases">
        <title>Complete sequence of Haemophilus somnus 2336.</title>
        <authorList>
            <consortium name="US DOE Joint Genome Institute"/>
            <person name="Siddaramappa S."/>
            <person name="Duncan A.J."/>
            <person name="Challacombe J.F."/>
            <person name="Rainey D."/>
            <person name="Gillaspy A.F."/>
            <person name="Carson M."/>
            <person name="Gipson J."/>
            <person name="Gipson M."/>
            <person name="Bruce D."/>
            <person name="Detter J.C."/>
            <person name="Han C.S."/>
            <person name="Land M."/>
            <person name="Tapia R."/>
            <person name="Thompson L.S."/>
            <person name="Orvis J."/>
            <person name="Zaitshik J."/>
            <person name="Barnes G."/>
            <person name="Brettin T.S."/>
            <person name="Dyer D.W."/>
            <person name="Inzana T.J."/>
        </authorList>
    </citation>
    <scope>NUCLEOTIDE SEQUENCE [LARGE SCALE GENOMIC DNA]</scope>
    <source>
        <strain>2336</strain>
    </source>
</reference>
<keyword id="KW-0004">4Fe-4S</keyword>
<keyword id="KW-0067">ATP-binding</keyword>
<keyword id="KW-0963">Cytoplasm</keyword>
<keyword id="KW-0408">Iron</keyword>
<keyword id="KW-0411">Iron-sulfur</keyword>
<keyword id="KW-0460">Magnesium</keyword>
<keyword id="KW-0479">Metal-binding</keyword>
<keyword id="KW-0547">Nucleotide-binding</keyword>
<keyword id="KW-0694">RNA-binding</keyword>
<keyword id="KW-0808">Transferase</keyword>
<keyword id="KW-0819">tRNA processing</keyword>
<keyword id="KW-0820">tRNA-binding</keyword>
<organism>
    <name type="scientific">Histophilus somni (strain 2336)</name>
    <name type="common">Haemophilus somnus</name>
    <dbReference type="NCBI Taxonomy" id="228400"/>
    <lineage>
        <taxon>Bacteria</taxon>
        <taxon>Pseudomonadati</taxon>
        <taxon>Pseudomonadota</taxon>
        <taxon>Gammaproteobacteria</taxon>
        <taxon>Pasteurellales</taxon>
        <taxon>Pasteurellaceae</taxon>
        <taxon>Histophilus</taxon>
    </lineage>
</organism>
<evidence type="ECO:0000255" key="1">
    <source>
        <dbReference type="HAMAP-Rule" id="MF_01850"/>
    </source>
</evidence>
<protein>
    <recommendedName>
        <fullName evidence="1">tRNA-cytidine(32) 2-sulfurtransferase</fullName>
        <ecNumber evidence="1">2.8.1.-</ecNumber>
    </recommendedName>
    <alternativeName>
        <fullName evidence="1">Two-thiocytidine biosynthesis protein A</fullName>
    </alternativeName>
    <alternativeName>
        <fullName evidence="1">tRNA 2-thiocytidine biosynthesis protein TtcA</fullName>
    </alternativeName>
</protein>
<feature type="chain" id="PRO_0000348751" description="tRNA-cytidine(32) 2-sulfurtransferase">
    <location>
        <begin position="1"/>
        <end position="314"/>
    </location>
</feature>
<feature type="short sequence motif" description="PP-loop motif" evidence="1">
    <location>
        <begin position="49"/>
        <end position="54"/>
    </location>
</feature>
<feature type="binding site" evidence="1">
    <location>
        <position position="124"/>
    </location>
    <ligand>
        <name>[4Fe-4S] cluster</name>
        <dbReference type="ChEBI" id="CHEBI:49883"/>
    </ligand>
</feature>
<feature type="binding site" evidence="1">
    <location>
        <position position="127"/>
    </location>
    <ligand>
        <name>[4Fe-4S] cluster</name>
        <dbReference type="ChEBI" id="CHEBI:49883"/>
    </ligand>
</feature>
<feature type="binding site" evidence="1">
    <location>
        <position position="215"/>
    </location>
    <ligand>
        <name>[4Fe-4S] cluster</name>
        <dbReference type="ChEBI" id="CHEBI:49883"/>
    </ligand>
</feature>
<dbReference type="EC" id="2.8.1.-" evidence="1"/>
<dbReference type="EMBL" id="CP000947">
    <property type="protein sequence ID" value="ACA31074.1"/>
    <property type="molecule type" value="Genomic_DNA"/>
</dbReference>
<dbReference type="RefSeq" id="WP_012340493.1">
    <property type="nucleotide sequence ID" value="NC_010519.1"/>
</dbReference>
<dbReference type="SMR" id="B0UU61"/>
<dbReference type="STRING" id="228400.HSM_1338"/>
<dbReference type="GeneID" id="31487640"/>
<dbReference type="KEGG" id="hsm:HSM_1338"/>
<dbReference type="HOGENOM" id="CLU_026481_0_0_6"/>
<dbReference type="GO" id="GO:0005737">
    <property type="term" value="C:cytoplasm"/>
    <property type="evidence" value="ECO:0007669"/>
    <property type="project" value="UniProtKB-SubCell"/>
</dbReference>
<dbReference type="GO" id="GO:0051539">
    <property type="term" value="F:4 iron, 4 sulfur cluster binding"/>
    <property type="evidence" value="ECO:0007669"/>
    <property type="project" value="UniProtKB-UniRule"/>
</dbReference>
<dbReference type="GO" id="GO:0005524">
    <property type="term" value="F:ATP binding"/>
    <property type="evidence" value="ECO:0007669"/>
    <property type="project" value="UniProtKB-UniRule"/>
</dbReference>
<dbReference type="GO" id="GO:0000287">
    <property type="term" value="F:magnesium ion binding"/>
    <property type="evidence" value="ECO:0007669"/>
    <property type="project" value="UniProtKB-UniRule"/>
</dbReference>
<dbReference type="GO" id="GO:0016783">
    <property type="term" value="F:sulfurtransferase activity"/>
    <property type="evidence" value="ECO:0007669"/>
    <property type="project" value="UniProtKB-UniRule"/>
</dbReference>
<dbReference type="GO" id="GO:0000049">
    <property type="term" value="F:tRNA binding"/>
    <property type="evidence" value="ECO:0007669"/>
    <property type="project" value="UniProtKB-KW"/>
</dbReference>
<dbReference type="GO" id="GO:0034227">
    <property type="term" value="P:tRNA thio-modification"/>
    <property type="evidence" value="ECO:0007669"/>
    <property type="project" value="UniProtKB-UniRule"/>
</dbReference>
<dbReference type="CDD" id="cd24138">
    <property type="entry name" value="TtcA-like"/>
    <property type="match status" value="1"/>
</dbReference>
<dbReference type="Gene3D" id="3.40.50.620">
    <property type="entry name" value="HUPs"/>
    <property type="match status" value="1"/>
</dbReference>
<dbReference type="HAMAP" id="MF_01850">
    <property type="entry name" value="TtcA"/>
    <property type="match status" value="1"/>
</dbReference>
<dbReference type="InterPro" id="IPR014729">
    <property type="entry name" value="Rossmann-like_a/b/a_fold"/>
</dbReference>
<dbReference type="InterPro" id="IPR011063">
    <property type="entry name" value="TilS/TtcA_N"/>
</dbReference>
<dbReference type="InterPro" id="IPR012089">
    <property type="entry name" value="tRNA_Cyd_32_2_STrfase"/>
</dbReference>
<dbReference type="InterPro" id="IPR035107">
    <property type="entry name" value="tRNA_thiolation_TtcA_Ctu1"/>
</dbReference>
<dbReference type="NCBIfam" id="NF007972">
    <property type="entry name" value="PRK10696.1"/>
    <property type="match status" value="1"/>
</dbReference>
<dbReference type="PANTHER" id="PTHR43686:SF1">
    <property type="entry name" value="AMINOTRAN_5 DOMAIN-CONTAINING PROTEIN"/>
    <property type="match status" value="1"/>
</dbReference>
<dbReference type="PANTHER" id="PTHR43686">
    <property type="entry name" value="SULFURTRANSFERASE-RELATED"/>
    <property type="match status" value="1"/>
</dbReference>
<dbReference type="Pfam" id="PF01171">
    <property type="entry name" value="ATP_bind_3"/>
    <property type="match status" value="1"/>
</dbReference>
<dbReference type="PIRSF" id="PIRSF004976">
    <property type="entry name" value="ATPase_YdaO"/>
    <property type="match status" value="1"/>
</dbReference>
<dbReference type="SUPFAM" id="SSF52402">
    <property type="entry name" value="Adenine nucleotide alpha hydrolases-like"/>
    <property type="match status" value="1"/>
</dbReference>
<name>TTCA_HISS2</name>
<comment type="function">
    <text evidence="1">Catalyzes the ATP-dependent 2-thiolation of cytidine in position 32 of tRNA, to form 2-thiocytidine (s(2)C32). The sulfur atoms are provided by the cysteine/cysteine desulfurase (IscS) system.</text>
</comment>
<comment type="catalytic activity">
    <reaction evidence="1">
        <text>cytidine(32) in tRNA + S-sulfanyl-L-cysteinyl-[cysteine desulfurase] + AH2 + ATP = 2-thiocytidine(32) in tRNA + L-cysteinyl-[cysteine desulfurase] + A + AMP + diphosphate + H(+)</text>
        <dbReference type="Rhea" id="RHEA:57048"/>
        <dbReference type="Rhea" id="RHEA-COMP:10288"/>
        <dbReference type="Rhea" id="RHEA-COMP:12157"/>
        <dbReference type="Rhea" id="RHEA-COMP:12158"/>
        <dbReference type="Rhea" id="RHEA-COMP:14821"/>
        <dbReference type="ChEBI" id="CHEBI:13193"/>
        <dbReference type="ChEBI" id="CHEBI:15378"/>
        <dbReference type="ChEBI" id="CHEBI:17499"/>
        <dbReference type="ChEBI" id="CHEBI:29950"/>
        <dbReference type="ChEBI" id="CHEBI:30616"/>
        <dbReference type="ChEBI" id="CHEBI:33019"/>
        <dbReference type="ChEBI" id="CHEBI:61963"/>
        <dbReference type="ChEBI" id="CHEBI:82748"/>
        <dbReference type="ChEBI" id="CHEBI:141453"/>
        <dbReference type="ChEBI" id="CHEBI:456215"/>
    </reaction>
    <physiologicalReaction direction="left-to-right" evidence="1">
        <dbReference type="Rhea" id="RHEA:57049"/>
    </physiologicalReaction>
</comment>
<comment type="cofactor">
    <cofactor evidence="1">
        <name>Mg(2+)</name>
        <dbReference type="ChEBI" id="CHEBI:18420"/>
    </cofactor>
</comment>
<comment type="cofactor">
    <cofactor evidence="1">
        <name>[4Fe-4S] cluster</name>
        <dbReference type="ChEBI" id="CHEBI:49883"/>
    </cofactor>
    <text evidence="1">Binds 1 [4Fe-4S] cluster per subunit. The cluster is chelated by three Cys residues, the fourth Fe has a free coordination site that may bind a sulfur atom transferred from the persulfide of IscS.</text>
</comment>
<comment type="pathway">
    <text evidence="1">tRNA modification.</text>
</comment>
<comment type="subunit">
    <text evidence="1">Homodimer.</text>
</comment>
<comment type="subcellular location">
    <subcellularLocation>
        <location evidence="1">Cytoplasm</location>
    </subcellularLocation>
</comment>
<comment type="miscellaneous">
    <text evidence="1">The thiolation reaction likely consists of two steps: a first activation step by ATP to form an adenylated intermediate of the target base of tRNA, and a second nucleophilic substitution step of the sulfur (S) atom supplied by the hydrosulfide attached to the Fe-S cluster.</text>
</comment>
<comment type="similarity">
    <text evidence="1">Belongs to the TtcA family.</text>
</comment>
<sequence length="314" mass="35795">MSLNIITEKDKKQSYNLNKLQKRLRRNVGNAIADFNMIENGDKVMVCLSGGKDSYTLLDILLNLRLNAPIHFDIVAVNLDQKQPGFPEHILPEYLKSISVDYKIVAENTYGIVKEKIPEGKTTCSLCSRLRRGILYRTATELGATKIALGHHRDDMLETLFLNMFYGGKLKSMPPKLISDDGKQIVIRPLAYCKEKDIEKYAVAKQFPIIPCNLCGSQPNLQRQVVKEMLQKWDRQYPGRIETMFSAIQNIVPSHLCDSNLFDFKRIRHGKIPEGIEGDIAFDKEAFSPTPLVQENDEKIDFIQGEMISFKEVN</sequence>
<proteinExistence type="inferred from homology"/>
<gene>
    <name evidence="1" type="primary">ttcA</name>
    <name type="ordered locus">HSM_1338</name>
</gene>
<accession>B0UU61</accession>